<protein>
    <recommendedName>
        <fullName>Nuclear receptor subfamily 4 group A member 2</fullName>
    </recommendedName>
</protein>
<comment type="function">
    <text evidence="3">Transcriptional regulator which is important for the differentiation and maintenance of meso-diencephalic dopaminergic (mdDA) neurons during development. It is crucial for expression of a set of genes such as SLC6A3, SLC18A2, TH and DRD2 which are essential for development of mdDA neurons (By similarity).</text>
</comment>
<comment type="subunit">
    <text evidence="1">Interacts with SFPQ, NCOR2, SIN3A and HADC1. The interaction with NCOR2 increases in the absence of PITX3. Interacts with PER2 (By similarity).</text>
</comment>
<comment type="subcellular location">
    <subcellularLocation>
        <location evidence="2">Cytoplasm</location>
    </subcellularLocation>
    <subcellularLocation>
        <location evidence="2">Nucleus</location>
    </subcellularLocation>
    <text evidence="2">Mostly nuclear; oxidative stress promotes cytoplasmic localization.</text>
</comment>
<comment type="domain">
    <text evidence="1">The ligand-binding domain (LBD) contains no cavity as a result of the tight packing of side chains from several bulky hydrophobic residues in the region normally occupied by ligands. NR4A2 lacks a 'classical' binding site for coactivators (By similarity).</text>
</comment>
<comment type="similarity">
    <text evidence="7">Belongs to the nuclear hormone receptor family. NR4 subfamily.</text>
</comment>
<proteinExistence type="evidence at transcript level"/>
<keyword id="KW-0963">Cytoplasm</keyword>
<keyword id="KW-0238">DNA-binding</keyword>
<keyword id="KW-0479">Metal-binding</keyword>
<keyword id="KW-0539">Nucleus</keyword>
<keyword id="KW-0675">Receptor</keyword>
<keyword id="KW-1185">Reference proteome</keyword>
<keyword id="KW-0804">Transcription</keyword>
<keyword id="KW-0805">Transcription regulation</keyword>
<keyword id="KW-0862">Zinc</keyword>
<keyword id="KW-0863">Zinc-finger</keyword>
<organism>
    <name type="scientific">Bos taurus</name>
    <name type="common">Bovine</name>
    <dbReference type="NCBI Taxonomy" id="9913"/>
    <lineage>
        <taxon>Eukaryota</taxon>
        <taxon>Metazoa</taxon>
        <taxon>Chordata</taxon>
        <taxon>Craniata</taxon>
        <taxon>Vertebrata</taxon>
        <taxon>Euteleostomi</taxon>
        <taxon>Mammalia</taxon>
        <taxon>Eutheria</taxon>
        <taxon>Laurasiatheria</taxon>
        <taxon>Artiodactyla</taxon>
        <taxon>Ruminantia</taxon>
        <taxon>Pecora</taxon>
        <taxon>Bovidae</taxon>
        <taxon>Bovinae</taxon>
        <taxon>Bos</taxon>
    </lineage>
</organism>
<feature type="chain" id="PRO_0000326151" description="Nuclear receptor subfamily 4 group A member 2">
    <location>
        <begin position="1"/>
        <end position="598"/>
    </location>
</feature>
<feature type="domain" description="NR LBD" evidence="5">
    <location>
        <begin position="360"/>
        <end position="595"/>
    </location>
</feature>
<feature type="DNA-binding region" description="Nuclear receptor" evidence="4">
    <location>
        <begin position="260"/>
        <end position="335"/>
    </location>
</feature>
<feature type="zinc finger region" description="NR C4-type" evidence="4">
    <location>
        <begin position="263"/>
        <end position="283"/>
    </location>
</feature>
<feature type="zinc finger region" description="NR C4-type" evidence="4">
    <location>
        <begin position="299"/>
        <end position="318"/>
    </location>
</feature>
<feature type="region of interest" description="Disordered" evidence="6">
    <location>
        <begin position="1"/>
        <end position="22"/>
    </location>
</feature>
<feature type="region of interest" description="Disordered" evidence="6">
    <location>
        <begin position="337"/>
        <end position="361"/>
    </location>
</feature>
<feature type="short sequence motif" description="Bipartite nuclear localization signal (NLS1)" evidence="1">
    <location>
        <begin position="287"/>
        <end position="314"/>
    </location>
</feature>
<feature type="short sequence motif" description="Nuclear localization signal (NLS1)" evidence="1">
    <location>
        <begin position="338"/>
        <end position="350"/>
    </location>
</feature>
<feature type="short sequence motif" description="nuclear export sequence (NES1)" evidence="1">
    <location>
        <begin position="443"/>
        <end position="452"/>
    </location>
</feature>
<feature type="short sequence motif" description="nuclear export sequence (NES2)" evidence="1">
    <location>
        <begin position="568"/>
        <end position="577"/>
    </location>
</feature>
<feature type="compositionally biased region" description="Low complexity" evidence="6">
    <location>
        <begin position="8"/>
        <end position="22"/>
    </location>
</feature>
<feature type="compositionally biased region" description="Pro residues" evidence="6">
    <location>
        <begin position="352"/>
        <end position="361"/>
    </location>
</feature>
<dbReference type="EMBL" id="BC123415">
    <property type="protein sequence ID" value="AAI23416.1"/>
    <property type="molecule type" value="mRNA"/>
</dbReference>
<dbReference type="RefSeq" id="NP_001069676.1">
    <property type="nucleotide sequence ID" value="NM_001076208.1"/>
</dbReference>
<dbReference type="RefSeq" id="XP_005202534.1">
    <property type="nucleotide sequence ID" value="XM_005202477.4"/>
</dbReference>
<dbReference type="RefSeq" id="XP_005202535.1">
    <property type="nucleotide sequence ID" value="XM_005202478.3"/>
</dbReference>
<dbReference type="RefSeq" id="XP_005202536.1">
    <property type="nucleotide sequence ID" value="XM_005202479.5"/>
</dbReference>
<dbReference type="RefSeq" id="XP_010800315.1">
    <property type="nucleotide sequence ID" value="XM_010802013.2"/>
</dbReference>
<dbReference type="RefSeq" id="XP_015330896.1">
    <property type="nucleotide sequence ID" value="XM_015475410.1"/>
</dbReference>
<dbReference type="RefSeq" id="XP_059732143.1">
    <property type="nucleotide sequence ID" value="XM_059876160.1"/>
</dbReference>
<dbReference type="RefSeq" id="XP_059732144.1">
    <property type="nucleotide sequence ID" value="XM_059876161.1"/>
</dbReference>
<dbReference type="BMRB" id="Q08E53"/>
<dbReference type="SMR" id="Q08E53"/>
<dbReference type="FunCoup" id="Q08E53">
    <property type="interactions" value="574"/>
</dbReference>
<dbReference type="STRING" id="9913.ENSBTAP00000004758"/>
<dbReference type="PaxDb" id="9913-ENSBTAP00000004758"/>
<dbReference type="Ensembl" id="ENSBTAT00000004758.5">
    <property type="protein sequence ID" value="ENSBTAP00000004758.3"/>
    <property type="gene ID" value="ENSBTAG00000003650.5"/>
</dbReference>
<dbReference type="GeneID" id="540245"/>
<dbReference type="KEGG" id="bta:540245"/>
<dbReference type="CTD" id="4929"/>
<dbReference type="VEuPathDB" id="HostDB:ENSBTAG00000003650"/>
<dbReference type="VGNC" id="VGNC:32246">
    <property type="gene designation" value="NR4A2"/>
</dbReference>
<dbReference type="eggNOG" id="KOG4217">
    <property type="taxonomic scope" value="Eukaryota"/>
</dbReference>
<dbReference type="GeneTree" id="ENSGT00950000183038"/>
<dbReference type="HOGENOM" id="CLU_007368_14_2_1"/>
<dbReference type="InParanoid" id="Q08E53"/>
<dbReference type="OMA" id="EDIPMHN"/>
<dbReference type="OrthoDB" id="5952118at2759"/>
<dbReference type="TreeFam" id="TF315430"/>
<dbReference type="Reactome" id="R-BTA-383280">
    <property type="pathway name" value="Nuclear Receptor transcription pathway"/>
</dbReference>
<dbReference type="Proteomes" id="UP000009136">
    <property type="component" value="Chromosome 2"/>
</dbReference>
<dbReference type="Bgee" id="ENSBTAG00000003650">
    <property type="expression patterns" value="Expressed in adenohypophysis and 103 other cell types or tissues"/>
</dbReference>
<dbReference type="GO" id="GO:0005737">
    <property type="term" value="C:cytoplasm"/>
    <property type="evidence" value="ECO:0007669"/>
    <property type="project" value="UniProtKB-SubCell"/>
</dbReference>
<dbReference type="GO" id="GO:0005634">
    <property type="term" value="C:nucleus"/>
    <property type="evidence" value="ECO:0000250"/>
    <property type="project" value="UniProtKB"/>
</dbReference>
<dbReference type="GO" id="GO:0005667">
    <property type="term" value="C:transcription regulator complex"/>
    <property type="evidence" value="ECO:0000318"/>
    <property type="project" value="GO_Central"/>
</dbReference>
<dbReference type="GO" id="GO:0001228">
    <property type="term" value="F:DNA-binding transcription activator activity, RNA polymerase II-specific"/>
    <property type="evidence" value="ECO:0000250"/>
    <property type="project" value="UniProtKB"/>
</dbReference>
<dbReference type="GO" id="GO:0000981">
    <property type="term" value="F:DNA-binding transcription factor activity, RNA polymerase II-specific"/>
    <property type="evidence" value="ECO:0000318"/>
    <property type="project" value="GO_Central"/>
</dbReference>
<dbReference type="GO" id="GO:0035259">
    <property type="term" value="F:nuclear glucocorticoid receptor binding"/>
    <property type="evidence" value="ECO:0000318"/>
    <property type="project" value="GO_Central"/>
</dbReference>
<dbReference type="GO" id="GO:0004879">
    <property type="term" value="F:nuclear receptor activity"/>
    <property type="evidence" value="ECO:0007669"/>
    <property type="project" value="InterPro"/>
</dbReference>
<dbReference type="GO" id="GO:0046982">
    <property type="term" value="F:protein heterodimerization activity"/>
    <property type="evidence" value="ECO:0000250"/>
    <property type="project" value="UniProtKB"/>
</dbReference>
<dbReference type="GO" id="GO:0000978">
    <property type="term" value="F:RNA polymerase II cis-regulatory region sequence-specific DNA binding"/>
    <property type="evidence" value="ECO:0000318"/>
    <property type="project" value="GO_Central"/>
</dbReference>
<dbReference type="GO" id="GO:0008270">
    <property type="term" value="F:zinc ion binding"/>
    <property type="evidence" value="ECO:0007669"/>
    <property type="project" value="UniProtKB-KW"/>
</dbReference>
<dbReference type="GO" id="GO:0071376">
    <property type="term" value="P:cellular response to corticotropin-releasing hormone stimulus"/>
    <property type="evidence" value="ECO:0000250"/>
    <property type="project" value="UniProtKB"/>
</dbReference>
<dbReference type="GO" id="GO:0021953">
    <property type="term" value="P:central nervous system neuron differentiation"/>
    <property type="evidence" value="ECO:0000318"/>
    <property type="project" value="GO_Central"/>
</dbReference>
<dbReference type="GO" id="GO:0006351">
    <property type="term" value="P:DNA-templated transcription"/>
    <property type="evidence" value="ECO:0000250"/>
    <property type="project" value="UniProtKB"/>
</dbReference>
<dbReference type="GO" id="GO:0071542">
    <property type="term" value="P:dopaminergic neuron differentiation"/>
    <property type="evidence" value="ECO:0000250"/>
    <property type="project" value="UniProtKB"/>
</dbReference>
<dbReference type="GO" id="GO:0045444">
    <property type="term" value="P:fat cell differentiation"/>
    <property type="evidence" value="ECO:0000250"/>
    <property type="project" value="UniProtKB"/>
</dbReference>
<dbReference type="GO" id="GO:0045944">
    <property type="term" value="P:positive regulation of transcription by RNA polymerase II"/>
    <property type="evidence" value="ECO:0000250"/>
    <property type="project" value="UniProtKB"/>
</dbReference>
<dbReference type="GO" id="GO:0006357">
    <property type="term" value="P:regulation of transcription by RNA polymerase II"/>
    <property type="evidence" value="ECO:0000318"/>
    <property type="project" value="GO_Central"/>
</dbReference>
<dbReference type="CDD" id="cd06969">
    <property type="entry name" value="NR_DBD_NGFI-B"/>
    <property type="match status" value="1"/>
</dbReference>
<dbReference type="CDD" id="cd07071">
    <property type="entry name" value="NR_LBD_Nurr1"/>
    <property type="match status" value="1"/>
</dbReference>
<dbReference type="FunFam" id="1.10.565.10:FF:000008">
    <property type="entry name" value="Nuclear receptor subfamily 4 group A member 1"/>
    <property type="match status" value="1"/>
</dbReference>
<dbReference type="FunFam" id="3.30.50.10:FF:000009">
    <property type="entry name" value="nuclear receptor subfamily 4 group A member 2"/>
    <property type="match status" value="1"/>
</dbReference>
<dbReference type="Gene3D" id="3.30.50.10">
    <property type="entry name" value="Erythroid Transcription Factor GATA-1, subunit A"/>
    <property type="match status" value="1"/>
</dbReference>
<dbReference type="Gene3D" id="1.10.565.10">
    <property type="entry name" value="Retinoid X Receptor"/>
    <property type="match status" value="1"/>
</dbReference>
<dbReference type="InterPro" id="IPR035500">
    <property type="entry name" value="NHR-like_dom_sf"/>
</dbReference>
<dbReference type="InterPro" id="IPR003070">
    <property type="entry name" value="NR4A1-3"/>
</dbReference>
<dbReference type="InterPro" id="IPR003073">
    <property type="entry name" value="NR4A2"/>
</dbReference>
<dbReference type="InterPro" id="IPR000536">
    <property type="entry name" value="Nucl_hrmn_rcpt_lig-bd"/>
</dbReference>
<dbReference type="InterPro" id="IPR001723">
    <property type="entry name" value="Nuclear_hrmn_rcpt"/>
</dbReference>
<dbReference type="InterPro" id="IPR001628">
    <property type="entry name" value="Znf_hrmn_rcpt"/>
</dbReference>
<dbReference type="InterPro" id="IPR013088">
    <property type="entry name" value="Znf_NHR/GATA"/>
</dbReference>
<dbReference type="PANTHER" id="PTHR24085">
    <property type="entry name" value="NUCLEAR HORMONE RECEPTOR"/>
    <property type="match status" value="1"/>
</dbReference>
<dbReference type="PANTHER" id="PTHR24085:SF0">
    <property type="entry name" value="NUCLEAR RECEPTOR SUBFAMILY 4 GROUP A MEMBER 2"/>
    <property type="match status" value="1"/>
</dbReference>
<dbReference type="Pfam" id="PF00104">
    <property type="entry name" value="Hormone_recep"/>
    <property type="match status" value="1"/>
</dbReference>
<dbReference type="Pfam" id="PF00105">
    <property type="entry name" value="zf-C4"/>
    <property type="match status" value="1"/>
</dbReference>
<dbReference type="PRINTS" id="PR01284">
    <property type="entry name" value="NUCLEARECPTR"/>
</dbReference>
<dbReference type="PRINTS" id="PR01287">
    <property type="entry name" value="NURRNUCRCPTR"/>
</dbReference>
<dbReference type="PRINTS" id="PR00398">
    <property type="entry name" value="STRDHORMONER"/>
</dbReference>
<dbReference type="PRINTS" id="PR00047">
    <property type="entry name" value="STROIDFINGER"/>
</dbReference>
<dbReference type="SMART" id="SM00430">
    <property type="entry name" value="HOLI"/>
    <property type="match status" value="1"/>
</dbReference>
<dbReference type="SMART" id="SM00399">
    <property type="entry name" value="ZnF_C4"/>
    <property type="match status" value="1"/>
</dbReference>
<dbReference type="SUPFAM" id="SSF57716">
    <property type="entry name" value="Glucocorticoid receptor-like (DNA-binding domain)"/>
    <property type="match status" value="1"/>
</dbReference>
<dbReference type="SUPFAM" id="SSF48508">
    <property type="entry name" value="Nuclear receptor ligand-binding domain"/>
    <property type="match status" value="1"/>
</dbReference>
<dbReference type="PROSITE" id="PS51843">
    <property type="entry name" value="NR_LBD"/>
    <property type="match status" value="1"/>
</dbReference>
<dbReference type="PROSITE" id="PS00031">
    <property type="entry name" value="NUCLEAR_REC_DBD_1"/>
    <property type="match status" value="1"/>
</dbReference>
<dbReference type="PROSITE" id="PS51030">
    <property type="entry name" value="NUCLEAR_REC_DBD_2"/>
    <property type="match status" value="1"/>
</dbReference>
<reference key="1">
    <citation type="submission" date="2006-09" db="EMBL/GenBank/DDBJ databases">
        <authorList>
            <consortium name="NIH - Mammalian Gene Collection (MGC) project"/>
        </authorList>
    </citation>
    <scope>NUCLEOTIDE SEQUENCE [LARGE SCALE MRNA]</scope>
    <source>
        <strain>Hereford</strain>
        <tissue>Hippocampus</tissue>
    </source>
</reference>
<evidence type="ECO:0000250" key="1"/>
<evidence type="ECO:0000250" key="2">
    <source>
        <dbReference type="UniProtKB" id="P43354"/>
    </source>
</evidence>
<evidence type="ECO:0000250" key="3">
    <source>
        <dbReference type="UniProtKB" id="Q06219"/>
    </source>
</evidence>
<evidence type="ECO:0000255" key="4">
    <source>
        <dbReference type="PROSITE-ProRule" id="PRU00407"/>
    </source>
</evidence>
<evidence type="ECO:0000255" key="5">
    <source>
        <dbReference type="PROSITE-ProRule" id="PRU01189"/>
    </source>
</evidence>
<evidence type="ECO:0000256" key="6">
    <source>
        <dbReference type="SAM" id="MobiDB-lite"/>
    </source>
</evidence>
<evidence type="ECO:0000305" key="7"/>
<sequence length="598" mass="66621">MPCVQAQYGSSPQGASPASQSYSYHSSGEYSSDFLTPEFVKFSMDLTNTEITATTSLPSFSTFMDNYSTGYDVKPPCLYQMPLSGQQSSIKVEDIQMHNYQQHSHLPPQSEEMMPHSGSVYYKPSSPPTPTTPGFQVQHSPMWDDPGSLHNFHQNYVATTHMIEQRKTPVSRLSLFSFKQSPPGTPVSSCQMRFDGPLHVPMNPEPAGSHHVVDGQTFAVPNPIRKPASMGFPGLQIGHASQLLDTQVPSPPSRGSPSNEGLCAVCGDNAACQHYGVRTCEGCKGFFKRTVQKNAKYVCLANKNCPVDKRRRNRCQYCRFQKCLAVGMVKEVVRTDSLKGRRGRLPSKPKSPQEPSPPSPPVSLISALVRAHVDSNPAMTSLDYSRFQANPDYQMSGDDTQHIQQFYDLLTGSMEIIRGWAEKIPGFTDLPKADQDLLFESAFLELFVLRLAYRSNPVEGKLIFCNGVVLHRLQCVRGFGEWIDSIVEFSSNLQNMNIDISAFSCIAALAMVTERHGLKEPKRVEELQNKIVNCLKDHVTFNNGGLNRPNYLSKLLGKLPELRTLCTQGLQRIFYLKLEDLVPPPAIIDKLFLDTLPF</sequence>
<gene>
    <name type="primary">NR4A2</name>
</gene>
<name>NR4A2_BOVIN</name>
<accession>Q08E53</accession>